<organism>
    <name type="scientific">Thermotoga petrophila (strain ATCC BAA-488 / DSM 13995 / JCM 10881 / RKU-1)</name>
    <dbReference type="NCBI Taxonomy" id="390874"/>
    <lineage>
        <taxon>Bacteria</taxon>
        <taxon>Thermotogati</taxon>
        <taxon>Thermotogota</taxon>
        <taxon>Thermotogae</taxon>
        <taxon>Thermotogales</taxon>
        <taxon>Thermotogaceae</taxon>
        <taxon>Thermotoga</taxon>
    </lineage>
</organism>
<reference key="1">
    <citation type="submission" date="2007-05" db="EMBL/GenBank/DDBJ databases">
        <title>Complete sequence of Thermotoga petrophila RKU-1.</title>
        <authorList>
            <consortium name="US DOE Joint Genome Institute"/>
            <person name="Copeland A."/>
            <person name="Lucas S."/>
            <person name="Lapidus A."/>
            <person name="Barry K."/>
            <person name="Glavina del Rio T."/>
            <person name="Dalin E."/>
            <person name="Tice H."/>
            <person name="Pitluck S."/>
            <person name="Sims D."/>
            <person name="Brettin T."/>
            <person name="Bruce D."/>
            <person name="Detter J.C."/>
            <person name="Han C."/>
            <person name="Tapia R."/>
            <person name="Schmutz J."/>
            <person name="Larimer F."/>
            <person name="Land M."/>
            <person name="Hauser L."/>
            <person name="Kyrpides N."/>
            <person name="Mikhailova N."/>
            <person name="Nelson K."/>
            <person name="Gogarten J.P."/>
            <person name="Noll K."/>
            <person name="Richardson P."/>
        </authorList>
    </citation>
    <scope>NUCLEOTIDE SEQUENCE [LARGE SCALE GENOMIC DNA]</scope>
    <source>
        <strain>ATCC BAA-488 / DSM 13995 / JCM 10881 / RKU-1</strain>
    </source>
</reference>
<proteinExistence type="inferred from homology"/>
<keyword id="KW-0687">Ribonucleoprotein</keyword>
<keyword id="KW-0689">Ribosomal protein</keyword>
<keyword id="KW-0694">RNA-binding</keyword>
<keyword id="KW-0699">rRNA-binding</keyword>
<feature type="chain" id="PRO_1000014672" description="Small ribosomal subunit protein bS20">
    <location>
        <begin position="1"/>
        <end position="96"/>
    </location>
</feature>
<sequence length="96" mass="11391">MPNIKSAKKRVRVSEKRRLRNKAYKTFFKNRIKEVLKAIENKEPKEVVLELTRKAQAAIDKAVSKRVIHKNQGARRKARLFEKVNEYLRTLETTQE</sequence>
<comment type="function">
    <text evidence="1">Binds directly to 16S ribosomal RNA.</text>
</comment>
<comment type="similarity">
    <text evidence="1">Belongs to the bacterial ribosomal protein bS20 family.</text>
</comment>
<evidence type="ECO:0000255" key="1">
    <source>
        <dbReference type="HAMAP-Rule" id="MF_00500"/>
    </source>
</evidence>
<evidence type="ECO:0000305" key="2"/>
<name>RS20_THEP1</name>
<dbReference type="EMBL" id="CP000702">
    <property type="protein sequence ID" value="ABQ47148.1"/>
    <property type="molecule type" value="Genomic_DNA"/>
</dbReference>
<dbReference type="RefSeq" id="WP_011943664.1">
    <property type="nucleotide sequence ID" value="NC_009486.1"/>
</dbReference>
<dbReference type="SMR" id="A5ILS5"/>
<dbReference type="STRING" id="390874.Tpet_1134"/>
<dbReference type="KEGG" id="tpt:Tpet_1134"/>
<dbReference type="eggNOG" id="COG0268">
    <property type="taxonomic scope" value="Bacteria"/>
</dbReference>
<dbReference type="HOGENOM" id="CLU_160655_5_0_0"/>
<dbReference type="Proteomes" id="UP000006558">
    <property type="component" value="Chromosome"/>
</dbReference>
<dbReference type="GO" id="GO:0005829">
    <property type="term" value="C:cytosol"/>
    <property type="evidence" value="ECO:0007669"/>
    <property type="project" value="TreeGrafter"/>
</dbReference>
<dbReference type="GO" id="GO:0015935">
    <property type="term" value="C:small ribosomal subunit"/>
    <property type="evidence" value="ECO:0007669"/>
    <property type="project" value="TreeGrafter"/>
</dbReference>
<dbReference type="GO" id="GO:0070181">
    <property type="term" value="F:small ribosomal subunit rRNA binding"/>
    <property type="evidence" value="ECO:0007669"/>
    <property type="project" value="TreeGrafter"/>
</dbReference>
<dbReference type="GO" id="GO:0003735">
    <property type="term" value="F:structural constituent of ribosome"/>
    <property type="evidence" value="ECO:0007669"/>
    <property type="project" value="InterPro"/>
</dbReference>
<dbReference type="GO" id="GO:0006412">
    <property type="term" value="P:translation"/>
    <property type="evidence" value="ECO:0007669"/>
    <property type="project" value="UniProtKB-UniRule"/>
</dbReference>
<dbReference type="FunFam" id="1.20.58.110:FF:000001">
    <property type="entry name" value="30S ribosomal protein S20"/>
    <property type="match status" value="1"/>
</dbReference>
<dbReference type="Gene3D" id="1.20.58.110">
    <property type="entry name" value="Ribosomal protein S20"/>
    <property type="match status" value="1"/>
</dbReference>
<dbReference type="HAMAP" id="MF_00500">
    <property type="entry name" value="Ribosomal_bS20"/>
    <property type="match status" value="1"/>
</dbReference>
<dbReference type="InterPro" id="IPR002583">
    <property type="entry name" value="Ribosomal_bS20"/>
</dbReference>
<dbReference type="InterPro" id="IPR036510">
    <property type="entry name" value="Ribosomal_bS20_sf"/>
</dbReference>
<dbReference type="NCBIfam" id="TIGR00029">
    <property type="entry name" value="S20"/>
    <property type="match status" value="1"/>
</dbReference>
<dbReference type="PANTHER" id="PTHR33398">
    <property type="entry name" value="30S RIBOSOMAL PROTEIN S20"/>
    <property type="match status" value="1"/>
</dbReference>
<dbReference type="PANTHER" id="PTHR33398:SF1">
    <property type="entry name" value="SMALL RIBOSOMAL SUBUNIT PROTEIN BS20C"/>
    <property type="match status" value="1"/>
</dbReference>
<dbReference type="Pfam" id="PF01649">
    <property type="entry name" value="Ribosomal_S20p"/>
    <property type="match status" value="1"/>
</dbReference>
<dbReference type="SUPFAM" id="SSF46992">
    <property type="entry name" value="Ribosomal protein S20"/>
    <property type="match status" value="1"/>
</dbReference>
<accession>A5ILS5</accession>
<protein>
    <recommendedName>
        <fullName evidence="1">Small ribosomal subunit protein bS20</fullName>
    </recommendedName>
    <alternativeName>
        <fullName evidence="2">30S ribosomal protein S20</fullName>
    </alternativeName>
</protein>
<gene>
    <name evidence="1" type="primary">rpsT</name>
    <name type="ordered locus">Tpet_1134</name>
</gene>